<reference key="1">
    <citation type="journal article" date="2002" name="Nature">
        <title>Comparison of the genomes of two Xanthomonas pathogens with differing host specificities.</title>
        <authorList>
            <person name="da Silva A.C.R."/>
            <person name="Ferro J.A."/>
            <person name="Reinach F.C."/>
            <person name="Farah C.S."/>
            <person name="Furlan L.R."/>
            <person name="Quaggio R.B."/>
            <person name="Monteiro-Vitorello C.B."/>
            <person name="Van Sluys M.A."/>
            <person name="Almeida N.F. Jr."/>
            <person name="Alves L.M.C."/>
            <person name="do Amaral A.M."/>
            <person name="Bertolini M.C."/>
            <person name="Camargo L.E.A."/>
            <person name="Camarotte G."/>
            <person name="Cannavan F."/>
            <person name="Cardozo J."/>
            <person name="Chambergo F."/>
            <person name="Ciapina L.P."/>
            <person name="Cicarelli R.M.B."/>
            <person name="Coutinho L.L."/>
            <person name="Cursino-Santos J.R."/>
            <person name="El-Dorry H."/>
            <person name="Faria J.B."/>
            <person name="Ferreira A.J.S."/>
            <person name="Ferreira R.C.C."/>
            <person name="Ferro M.I.T."/>
            <person name="Formighieri E.F."/>
            <person name="Franco M.C."/>
            <person name="Greggio C.C."/>
            <person name="Gruber A."/>
            <person name="Katsuyama A.M."/>
            <person name="Kishi L.T."/>
            <person name="Leite R.P."/>
            <person name="Lemos E.G.M."/>
            <person name="Lemos M.V.F."/>
            <person name="Locali E.C."/>
            <person name="Machado M.A."/>
            <person name="Madeira A.M.B.N."/>
            <person name="Martinez-Rossi N.M."/>
            <person name="Martins E.C."/>
            <person name="Meidanis J."/>
            <person name="Menck C.F.M."/>
            <person name="Miyaki C.Y."/>
            <person name="Moon D.H."/>
            <person name="Moreira L.M."/>
            <person name="Novo M.T.M."/>
            <person name="Okura V.K."/>
            <person name="Oliveira M.C."/>
            <person name="Oliveira V.R."/>
            <person name="Pereira H.A."/>
            <person name="Rossi A."/>
            <person name="Sena J.A.D."/>
            <person name="Silva C."/>
            <person name="de Souza R.F."/>
            <person name="Spinola L.A.F."/>
            <person name="Takita M.A."/>
            <person name="Tamura R.E."/>
            <person name="Teixeira E.C."/>
            <person name="Tezza R.I.D."/>
            <person name="Trindade dos Santos M."/>
            <person name="Truffi D."/>
            <person name="Tsai S.M."/>
            <person name="White F.F."/>
            <person name="Setubal J.C."/>
            <person name="Kitajima J.P."/>
        </authorList>
    </citation>
    <scope>NUCLEOTIDE SEQUENCE [LARGE SCALE GENOMIC DNA]</scope>
    <source>
        <strain>ATCC 33913 / DSM 3586 / NCPPB 528 / LMG 568 / P 25</strain>
    </source>
</reference>
<dbReference type="EMBL" id="AE008922">
    <property type="protein sequence ID" value="AAM42298.1"/>
    <property type="molecule type" value="Genomic_DNA"/>
</dbReference>
<dbReference type="RefSeq" id="NP_638374.1">
    <property type="nucleotide sequence ID" value="NC_003902.1"/>
</dbReference>
<dbReference type="RefSeq" id="WP_011038142.1">
    <property type="nucleotide sequence ID" value="NC_003902.1"/>
</dbReference>
<dbReference type="SMR" id="Q8P6E3"/>
<dbReference type="STRING" id="190485.XCC3027"/>
<dbReference type="EnsemblBacteria" id="AAM42298">
    <property type="protein sequence ID" value="AAM42298"/>
    <property type="gene ID" value="XCC3027"/>
</dbReference>
<dbReference type="KEGG" id="xcc:XCC3027"/>
<dbReference type="PATRIC" id="fig|190485.4.peg.3229"/>
<dbReference type="eggNOG" id="COG0217">
    <property type="taxonomic scope" value="Bacteria"/>
</dbReference>
<dbReference type="HOGENOM" id="CLU_062974_2_2_6"/>
<dbReference type="OrthoDB" id="9781053at2"/>
<dbReference type="Proteomes" id="UP000001010">
    <property type="component" value="Chromosome"/>
</dbReference>
<dbReference type="GO" id="GO:0005829">
    <property type="term" value="C:cytosol"/>
    <property type="evidence" value="ECO:0000318"/>
    <property type="project" value="GO_Central"/>
</dbReference>
<dbReference type="GO" id="GO:0003677">
    <property type="term" value="F:DNA binding"/>
    <property type="evidence" value="ECO:0007669"/>
    <property type="project" value="UniProtKB-UniRule"/>
</dbReference>
<dbReference type="GO" id="GO:0006355">
    <property type="term" value="P:regulation of DNA-templated transcription"/>
    <property type="evidence" value="ECO:0007669"/>
    <property type="project" value="UniProtKB-UniRule"/>
</dbReference>
<dbReference type="FunFam" id="1.10.10.200:FF:000007">
    <property type="entry name" value="Probable transcriptional regulatory protein AC801_15750"/>
    <property type="match status" value="1"/>
</dbReference>
<dbReference type="FunFam" id="3.30.70.980:FF:000002">
    <property type="entry name" value="Probable transcriptional regulatory protein YebC"/>
    <property type="match status" value="1"/>
</dbReference>
<dbReference type="Gene3D" id="1.10.10.200">
    <property type="match status" value="1"/>
</dbReference>
<dbReference type="Gene3D" id="3.30.70.980">
    <property type="match status" value="2"/>
</dbReference>
<dbReference type="HAMAP" id="MF_00693">
    <property type="entry name" value="Transcrip_reg_TACO1"/>
    <property type="match status" value="1"/>
</dbReference>
<dbReference type="InterPro" id="IPR017856">
    <property type="entry name" value="Integrase-like_N"/>
</dbReference>
<dbReference type="InterPro" id="IPR048300">
    <property type="entry name" value="TACO1_YebC-like_2nd/3rd_dom"/>
</dbReference>
<dbReference type="InterPro" id="IPR049083">
    <property type="entry name" value="TACO1_YebC_N"/>
</dbReference>
<dbReference type="InterPro" id="IPR002876">
    <property type="entry name" value="Transcrip_reg_TACO1-like"/>
</dbReference>
<dbReference type="InterPro" id="IPR026564">
    <property type="entry name" value="Transcrip_reg_TACO1-like_dom3"/>
</dbReference>
<dbReference type="InterPro" id="IPR029072">
    <property type="entry name" value="YebC-like"/>
</dbReference>
<dbReference type="NCBIfam" id="NF001030">
    <property type="entry name" value="PRK00110.1"/>
    <property type="match status" value="1"/>
</dbReference>
<dbReference type="NCBIfam" id="NF009044">
    <property type="entry name" value="PRK12378.1"/>
    <property type="match status" value="1"/>
</dbReference>
<dbReference type="NCBIfam" id="TIGR01033">
    <property type="entry name" value="YebC/PmpR family DNA-binding transcriptional regulator"/>
    <property type="match status" value="1"/>
</dbReference>
<dbReference type="PANTHER" id="PTHR12532:SF6">
    <property type="entry name" value="TRANSCRIPTIONAL REGULATORY PROTEIN YEBC-RELATED"/>
    <property type="match status" value="1"/>
</dbReference>
<dbReference type="PANTHER" id="PTHR12532">
    <property type="entry name" value="TRANSLATIONAL ACTIVATOR OF CYTOCHROME C OXIDASE 1"/>
    <property type="match status" value="1"/>
</dbReference>
<dbReference type="Pfam" id="PF20772">
    <property type="entry name" value="TACO1_YebC_N"/>
    <property type="match status" value="1"/>
</dbReference>
<dbReference type="Pfam" id="PF01709">
    <property type="entry name" value="Transcrip_reg"/>
    <property type="match status" value="1"/>
</dbReference>
<dbReference type="SUPFAM" id="SSF75625">
    <property type="entry name" value="YebC-like"/>
    <property type="match status" value="1"/>
</dbReference>
<gene>
    <name type="ordered locus">XCC3027</name>
</gene>
<evidence type="ECO:0000255" key="1">
    <source>
        <dbReference type="HAMAP-Rule" id="MF_00693"/>
    </source>
</evidence>
<protein>
    <recommendedName>
        <fullName evidence="1">Probable transcriptional regulatory protein XCC3027</fullName>
    </recommendedName>
</protein>
<proteinExistence type="inferred from homology"/>
<sequence>MGRGPSIEGRKNASDAKRGKIFTKIIREISVAARAGGGDPSNNPRLRTAMDKGLSSNMSKDVIERAIKKATGELEGVEYEEVRYEGYAPGGVAVIVDCLTDNRVRAVADVRHAFSKCGGNMGTDGSVAFMFKRLGVLSFAAGADEDAVTEAAIEAGADDVVVYPEDGAIDVLTAPDTFAQVKQALATAGFEPAHAEITFRAENDIAVDGDTAVQVRKLLDMLEDLDDVQDVYSNVDQASLGA</sequence>
<name>Y3027_XANCP</name>
<feature type="chain" id="PRO_0000175935" description="Probable transcriptional regulatory protein XCC3027">
    <location>
        <begin position="1"/>
        <end position="242"/>
    </location>
</feature>
<organism>
    <name type="scientific">Xanthomonas campestris pv. campestris (strain ATCC 33913 / DSM 3586 / NCPPB 528 / LMG 568 / P 25)</name>
    <dbReference type="NCBI Taxonomy" id="190485"/>
    <lineage>
        <taxon>Bacteria</taxon>
        <taxon>Pseudomonadati</taxon>
        <taxon>Pseudomonadota</taxon>
        <taxon>Gammaproteobacteria</taxon>
        <taxon>Lysobacterales</taxon>
        <taxon>Lysobacteraceae</taxon>
        <taxon>Xanthomonas</taxon>
    </lineage>
</organism>
<keyword id="KW-0963">Cytoplasm</keyword>
<keyword id="KW-0238">DNA-binding</keyword>
<keyword id="KW-1185">Reference proteome</keyword>
<keyword id="KW-0804">Transcription</keyword>
<keyword id="KW-0805">Transcription regulation</keyword>
<comment type="subcellular location">
    <subcellularLocation>
        <location evidence="1">Cytoplasm</location>
    </subcellularLocation>
</comment>
<comment type="similarity">
    <text evidence="1">Belongs to the TACO1 family.</text>
</comment>
<accession>Q8P6E3</accession>